<comment type="function">
    <text evidence="1">One of the primary rRNA binding proteins, it binds directly to 16S rRNA where it nucleates assembly of the body of the 30S subunit.</text>
</comment>
<comment type="function">
    <text evidence="1">With S5 and S12 plays an important role in translational accuracy.</text>
</comment>
<comment type="subunit">
    <text evidence="1">Part of the 30S ribosomal subunit. Contacts protein S5. The interaction surface between S4 and S5 is involved in control of translational fidelity (By similarity).</text>
</comment>
<comment type="subcellular location">
    <subcellularLocation>
        <location>Plastid</location>
        <location>Chloroplast</location>
    </subcellularLocation>
</comment>
<comment type="similarity">
    <text evidence="3">Belongs to the universal ribosomal protein uS4 family.</text>
</comment>
<dbReference type="EMBL" id="AP009370">
    <property type="protein sequence ID" value="BAF50112.1"/>
    <property type="molecule type" value="Genomic_DNA"/>
</dbReference>
<dbReference type="RefSeq" id="YP_001123288.1">
    <property type="nucleotide sequence ID" value="NC_009269.1"/>
</dbReference>
<dbReference type="SMR" id="A4QKA7"/>
<dbReference type="GeneID" id="4961874"/>
<dbReference type="GO" id="GO:0009507">
    <property type="term" value="C:chloroplast"/>
    <property type="evidence" value="ECO:0007669"/>
    <property type="project" value="UniProtKB-SubCell"/>
</dbReference>
<dbReference type="GO" id="GO:0015935">
    <property type="term" value="C:small ribosomal subunit"/>
    <property type="evidence" value="ECO:0007669"/>
    <property type="project" value="InterPro"/>
</dbReference>
<dbReference type="GO" id="GO:0019843">
    <property type="term" value="F:rRNA binding"/>
    <property type="evidence" value="ECO:0007669"/>
    <property type="project" value="UniProtKB-UniRule"/>
</dbReference>
<dbReference type="GO" id="GO:0003735">
    <property type="term" value="F:structural constituent of ribosome"/>
    <property type="evidence" value="ECO:0007669"/>
    <property type="project" value="InterPro"/>
</dbReference>
<dbReference type="GO" id="GO:0042274">
    <property type="term" value="P:ribosomal small subunit biogenesis"/>
    <property type="evidence" value="ECO:0007669"/>
    <property type="project" value="TreeGrafter"/>
</dbReference>
<dbReference type="GO" id="GO:0006412">
    <property type="term" value="P:translation"/>
    <property type="evidence" value="ECO:0007669"/>
    <property type="project" value="UniProtKB-UniRule"/>
</dbReference>
<dbReference type="CDD" id="cd00165">
    <property type="entry name" value="S4"/>
    <property type="match status" value="1"/>
</dbReference>
<dbReference type="FunFam" id="1.10.1050.10:FF:000002">
    <property type="entry name" value="30S ribosomal protein S4, chloroplastic"/>
    <property type="match status" value="1"/>
</dbReference>
<dbReference type="FunFam" id="3.10.290.10:FF:000081">
    <property type="entry name" value="30S ribosomal protein S4, chloroplastic"/>
    <property type="match status" value="1"/>
</dbReference>
<dbReference type="Gene3D" id="1.10.1050.10">
    <property type="entry name" value="Ribosomal Protein S4 Delta 41, Chain A, domain 1"/>
    <property type="match status" value="1"/>
</dbReference>
<dbReference type="Gene3D" id="3.10.290.10">
    <property type="entry name" value="RNA-binding S4 domain"/>
    <property type="match status" value="1"/>
</dbReference>
<dbReference type="HAMAP" id="MF_01306_B">
    <property type="entry name" value="Ribosomal_uS4_B"/>
    <property type="match status" value="1"/>
</dbReference>
<dbReference type="InterPro" id="IPR022801">
    <property type="entry name" value="Ribosomal_uS4"/>
</dbReference>
<dbReference type="InterPro" id="IPR005709">
    <property type="entry name" value="Ribosomal_uS4_bac-type"/>
</dbReference>
<dbReference type="InterPro" id="IPR018079">
    <property type="entry name" value="Ribosomal_uS4_CS"/>
</dbReference>
<dbReference type="InterPro" id="IPR001912">
    <property type="entry name" value="Ribosomal_uS4_N"/>
</dbReference>
<dbReference type="InterPro" id="IPR002942">
    <property type="entry name" value="S4_RNA-bd"/>
</dbReference>
<dbReference type="InterPro" id="IPR036986">
    <property type="entry name" value="S4_RNA-bd_sf"/>
</dbReference>
<dbReference type="NCBIfam" id="NF003717">
    <property type="entry name" value="PRK05327.1"/>
    <property type="match status" value="1"/>
</dbReference>
<dbReference type="NCBIfam" id="TIGR01017">
    <property type="entry name" value="rpsD_bact"/>
    <property type="match status" value="1"/>
</dbReference>
<dbReference type="PANTHER" id="PTHR11831">
    <property type="entry name" value="30S 40S RIBOSOMAL PROTEIN"/>
    <property type="match status" value="1"/>
</dbReference>
<dbReference type="PANTHER" id="PTHR11831:SF4">
    <property type="entry name" value="SMALL RIBOSOMAL SUBUNIT PROTEIN US4M"/>
    <property type="match status" value="1"/>
</dbReference>
<dbReference type="Pfam" id="PF00163">
    <property type="entry name" value="Ribosomal_S4"/>
    <property type="match status" value="1"/>
</dbReference>
<dbReference type="Pfam" id="PF01479">
    <property type="entry name" value="S4"/>
    <property type="match status" value="1"/>
</dbReference>
<dbReference type="SMART" id="SM01390">
    <property type="entry name" value="Ribosomal_S4"/>
    <property type="match status" value="1"/>
</dbReference>
<dbReference type="SMART" id="SM00363">
    <property type="entry name" value="S4"/>
    <property type="match status" value="1"/>
</dbReference>
<dbReference type="SUPFAM" id="SSF55174">
    <property type="entry name" value="Alpha-L RNA-binding motif"/>
    <property type="match status" value="1"/>
</dbReference>
<dbReference type="PROSITE" id="PS00632">
    <property type="entry name" value="RIBOSOMAL_S4"/>
    <property type="match status" value="1"/>
</dbReference>
<dbReference type="PROSITE" id="PS50889">
    <property type="entry name" value="S4"/>
    <property type="match status" value="1"/>
</dbReference>
<geneLocation type="chloroplast"/>
<feature type="chain" id="PRO_0000293420" description="Small ribosomal subunit protein uS4c">
    <location>
        <begin position="1"/>
        <end position="201"/>
    </location>
</feature>
<feature type="domain" description="S4 RNA-binding">
    <location>
        <begin position="89"/>
        <end position="152"/>
    </location>
</feature>
<feature type="region of interest" description="Disordered" evidence="2">
    <location>
        <begin position="20"/>
        <end position="44"/>
    </location>
</feature>
<proteinExistence type="inferred from homology"/>
<organism>
    <name type="scientific">Barbarea verna</name>
    <name type="common">Land cress</name>
    <name type="synonym">Erysimum vernum</name>
    <dbReference type="NCBI Taxonomy" id="50458"/>
    <lineage>
        <taxon>Eukaryota</taxon>
        <taxon>Viridiplantae</taxon>
        <taxon>Streptophyta</taxon>
        <taxon>Embryophyta</taxon>
        <taxon>Tracheophyta</taxon>
        <taxon>Spermatophyta</taxon>
        <taxon>Magnoliopsida</taxon>
        <taxon>eudicotyledons</taxon>
        <taxon>Gunneridae</taxon>
        <taxon>Pentapetalae</taxon>
        <taxon>rosids</taxon>
        <taxon>malvids</taxon>
        <taxon>Brassicales</taxon>
        <taxon>Brassicaceae</taxon>
        <taxon>Cardamineae</taxon>
        <taxon>Barbarea</taxon>
    </lineage>
</organism>
<name>RR4_BARVE</name>
<evidence type="ECO:0000250" key="1"/>
<evidence type="ECO:0000256" key="2">
    <source>
        <dbReference type="SAM" id="MobiDB-lite"/>
    </source>
</evidence>
<evidence type="ECO:0000305" key="3"/>
<keyword id="KW-0150">Chloroplast</keyword>
<keyword id="KW-0934">Plastid</keyword>
<keyword id="KW-0687">Ribonucleoprotein</keyword>
<keyword id="KW-0689">Ribosomal protein</keyword>
<keyword id="KW-0694">RNA-binding</keyword>
<keyword id="KW-0699">rRNA-binding</keyword>
<reference key="1">
    <citation type="submission" date="2007-03" db="EMBL/GenBank/DDBJ databases">
        <title>Sequencing analysis of Barbarea verna chloroplast DNA.</title>
        <authorList>
            <person name="Hosouchi T."/>
            <person name="Tsuruoka H."/>
            <person name="Kotani H."/>
        </authorList>
    </citation>
    <scope>NUCLEOTIDE SEQUENCE [LARGE SCALE GENOMIC DNA]</scope>
</reference>
<accession>A4QKA7</accession>
<sequence>MSRYRGPRFKKIRRLGALPGLTSKRPKAGSDLRNQSRSGKKSQYRIRLEEKQKLRFHYGLTERQLLKYVRIAGKAKGSTGQVLLQLLEMRLDNILFRLGMALTIPQARQLVNHGHILVNGRIVDIPSYRCKPRDIITVKDEQNSRTLVQNLLDSSAPEELPNHLTLHTFQYEGLVNQIIDRKCVGLKINELLVVEYYSRQT</sequence>
<protein>
    <recommendedName>
        <fullName evidence="3">Small ribosomal subunit protein uS4c</fullName>
    </recommendedName>
    <alternativeName>
        <fullName>30S ribosomal protein S4, chloroplastic</fullName>
    </alternativeName>
</protein>
<gene>
    <name type="primary">rps4</name>
</gene>